<protein>
    <recommendedName>
        <fullName>Potassium channel toxin alpha-KTx 20.1</fullName>
    </recommendedName>
    <alternativeName>
        <fullName>Toxin Tt28</fullName>
    </alternativeName>
</protein>
<keyword id="KW-0903">Direct protein sequencing</keyword>
<keyword id="KW-1015">Disulfide bond</keyword>
<keyword id="KW-0872">Ion channel impairing toxin</keyword>
<keyword id="KW-0528">Neurotoxin</keyword>
<keyword id="KW-0632">Potassium channel impairing toxin</keyword>
<keyword id="KW-0964">Secreted</keyword>
<keyword id="KW-0800">Toxin</keyword>
<keyword id="KW-1220">Voltage-gated potassium channel impairing toxin</keyword>
<dbReference type="SMR" id="P0C183"/>
<dbReference type="GO" id="GO:0005576">
    <property type="term" value="C:extracellular region"/>
    <property type="evidence" value="ECO:0007669"/>
    <property type="project" value="UniProtKB-SubCell"/>
</dbReference>
<dbReference type="GO" id="GO:0015459">
    <property type="term" value="F:potassium channel regulator activity"/>
    <property type="evidence" value="ECO:0007669"/>
    <property type="project" value="UniProtKB-KW"/>
</dbReference>
<dbReference type="GO" id="GO:0090729">
    <property type="term" value="F:toxin activity"/>
    <property type="evidence" value="ECO:0007669"/>
    <property type="project" value="UniProtKB-KW"/>
</dbReference>
<evidence type="ECO:0000250" key="1"/>
<evidence type="ECO:0000269" key="2">
    <source>
    </source>
</evidence>
<evidence type="ECO:0000305" key="3"/>
<evidence type="ECO:0000305" key="4">
    <source>
    </source>
</evidence>
<organism>
    <name type="scientific">Tityus trivittatus</name>
    <name type="common">Argentinean scorpion</name>
    <dbReference type="NCBI Taxonomy" id="369776"/>
    <lineage>
        <taxon>Eukaryota</taxon>
        <taxon>Metazoa</taxon>
        <taxon>Ecdysozoa</taxon>
        <taxon>Arthropoda</taxon>
        <taxon>Chelicerata</taxon>
        <taxon>Arachnida</taxon>
        <taxon>Scorpiones</taxon>
        <taxon>Buthida</taxon>
        <taxon>Buthoidea</taxon>
        <taxon>Buthidae</taxon>
        <taxon>Tityus</taxon>
    </lineage>
</organism>
<feature type="peptide" id="PRO_0000228824" description="Potassium channel toxin alpha-KTx 20.1">
    <location>
        <begin position="1"/>
        <end position="29"/>
    </location>
</feature>
<feature type="disulfide bond" evidence="1">
    <location>
        <begin position="2"/>
        <end position="20"/>
    </location>
</feature>
<feature type="disulfide bond" evidence="1">
    <location>
        <begin position="7"/>
        <end position="24"/>
    </location>
</feature>
<feature type="disulfide bond" evidence="1">
    <location>
        <begin position="11"/>
        <end position="26"/>
    </location>
</feature>
<reference key="1">
    <citation type="journal article" date="2006" name="FEBS Lett.">
        <title>A novel toxin from the venom of the scorpion Tityus trivittatus, is the first member of a new alpha-KTX subfamily.</title>
        <authorList>
            <person name="Abdel-Mottaleb Y."/>
            <person name="Coronas F.V."/>
            <person name="de Roodt A.R."/>
            <person name="Possani L.D."/>
            <person name="Tytgat J."/>
        </authorList>
    </citation>
    <scope>PROTEIN SEQUENCE</scope>
    <scope>FUNCTION</scope>
    <scope>MASS SPECTROMETRY</scope>
    <source>
        <tissue>Venom</tissue>
    </source>
</reference>
<accession>P0C183</accession>
<sequence length="29" mass="3316">GCTPEYCSMWCKVKVSQNYCVKNCKCPGR</sequence>
<proteinExistence type="evidence at protein level"/>
<comment type="function">
    <text evidence="2">Reduces potassium currents through Kv1.2/KCNA2 and Kv1.3/KCNA3 voltage-gated potassium channels.</text>
</comment>
<comment type="subcellular location">
    <subcellularLocation>
        <location>Secreted</location>
    </subcellularLocation>
</comment>
<comment type="tissue specificity">
    <text>Expressed by the venom gland.</text>
</comment>
<comment type="domain">
    <text evidence="3">Has the structural arrangement of an alpha-helix connected to antiparallel beta-sheets by disulfide bonds (CS-alpha/beta).</text>
</comment>
<comment type="mass spectrometry" mass="3310.3" method="Electrospray" evidence="2"/>
<comment type="miscellaneous">
    <text evidence="4">Negative results: has no effect on Kv1.1/KCNA1, Kv1.4/KCNA4, Kv1.5/KCNA5, shaker IR or Kv11.1/KCNH2 channels.</text>
</comment>
<comment type="similarity">
    <text evidence="3">Belongs to the short scorpion toxin superfamily. Potassium channel inhibitor family. Alpha-KTx 20 subfamily.</text>
</comment>
<name>KA201_TITTR</name>